<gene>
    <name evidence="1" type="primary">rbsD</name>
    <name type="ordered locus">SACOL0254</name>
</gene>
<protein>
    <recommendedName>
        <fullName evidence="1">D-ribose pyranase</fullName>
        <ecNumber evidence="1">5.4.99.62</ecNumber>
    </recommendedName>
</protein>
<keyword id="KW-0119">Carbohydrate metabolism</keyword>
<keyword id="KW-0963">Cytoplasm</keyword>
<keyword id="KW-0413">Isomerase</keyword>
<name>RBSD_STAAC</name>
<organism>
    <name type="scientific">Staphylococcus aureus (strain COL)</name>
    <dbReference type="NCBI Taxonomy" id="93062"/>
    <lineage>
        <taxon>Bacteria</taxon>
        <taxon>Bacillati</taxon>
        <taxon>Bacillota</taxon>
        <taxon>Bacilli</taxon>
        <taxon>Bacillales</taxon>
        <taxon>Staphylococcaceae</taxon>
        <taxon>Staphylococcus</taxon>
    </lineage>
</organism>
<dbReference type="EC" id="5.4.99.62" evidence="1"/>
<dbReference type="EMBL" id="CP000046">
    <property type="protein sequence ID" value="AAW38809.1"/>
    <property type="molecule type" value="Genomic_DNA"/>
</dbReference>
<dbReference type="RefSeq" id="WP_000747873.1">
    <property type="nucleotide sequence ID" value="NZ_JBGOFO010000001.1"/>
</dbReference>
<dbReference type="SMR" id="Q5HJA7"/>
<dbReference type="KEGG" id="sac:SACOL0254"/>
<dbReference type="HOGENOM" id="CLU_135498_0_0_9"/>
<dbReference type="UniPathway" id="UPA00916">
    <property type="reaction ID" value="UER00888"/>
</dbReference>
<dbReference type="Proteomes" id="UP000000530">
    <property type="component" value="Chromosome"/>
</dbReference>
<dbReference type="GO" id="GO:0005829">
    <property type="term" value="C:cytosol"/>
    <property type="evidence" value="ECO:0007669"/>
    <property type="project" value="TreeGrafter"/>
</dbReference>
<dbReference type="GO" id="GO:0062193">
    <property type="term" value="F:D-ribose pyranase activity"/>
    <property type="evidence" value="ECO:0007669"/>
    <property type="project" value="UniProtKB-EC"/>
</dbReference>
<dbReference type="GO" id="GO:0016872">
    <property type="term" value="F:intramolecular lyase activity"/>
    <property type="evidence" value="ECO:0007669"/>
    <property type="project" value="UniProtKB-UniRule"/>
</dbReference>
<dbReference type="GO" id="GO:0048029">
    <property type="term" value="F:monosaccharide binding"/>
    <property type="evidence" value="ECO:0007669"/>
    <property type="project" value="InterPro"/>
</dbReference>
<dbReference type="GO" id="GO:0019303">
    <property type="term" value="P:D-ribose catabolic process"/>
    <property type="evidence" value="ECO:0007669"/>
    <property type="project" value="UniProtKB-UniRule"/>
</dbReference>
<dbReference type="FunFam" id="3.40.1650.10:FF:000004">
    <property type="entry name" value="D-ribose pyranase"/>
    <property type="match status" value="1"/>
</dbReference>
<dbReference type="Gene3D" id="3.40.1650.10">
    <property type="entry name" value="RbsD-like domain"/>
    <property type="match status" value="1"/>
</dbReference>
<dbReference type="HAMAP" id="MF_01661">
    <property type="entry name" value="D_rib_pyranase"/>
    <property type="match status" value="1"/>
</dbReference>
<dbReference type="InterPro" id="IPR023064">
    <property type="entry name" value="D-ribose_pyranase"/>
</dbReference>
<dbReference type="InterPro" id="IPR023750">
    <property type="entry name" value="RbsD-like_sf"/>
</dbReference>
<dbReference type="InterPro" id="IPR007721">
    <property type="entry name" value="RbsD_FucU"/>
</dbReference>
<dbReference type="NCBIfam" id="NF008761">
    <property type="entry name" value="PRK11797.1"/>
    <property type="match status" value="1"/>
</dbReference>
<dbReference type="PANTHER" id="PTHR37831">
    <property type="entry name" value="D-RIBOSE PYRANASE"/>
    <property type="match status" value="1"/>
</dbReference>
<dbReference type="PANTHER" id="PTHR37831:SF1">
    <property type="entry name" value="D-RIBOSE PYRANASE"/>
    <property type="match status" value="1"/>
</dbReference>
<dbReference type="Pfam" id="PF05025">
    <property type="entry name" value="RbsD_FucU"/>
    <property type="match status" value="1"/>
</dbReference>
<dbReference type="SUPFAM" id="SSF102546">
    <property type="entry name" value="RbsD-like"/>
    <property type="match status" value="1"/>
</dbReference>
<accession>Q5HJA7</accession>
<evidence type="ECO:0000255" key="1">
    <source>
        <dbReference type="HAMAP-Rule" id="MF_01661"/>
    </source>
</evidence>
<feature type="chain" id="PRO_0000346262" description="D-ribose pyranase">
    <location>
        <begin position="1"/>
        <end position="134"/>
    </location>
</feature>
<feature type="active site" description="Proton donor" evidence="1">
    <location>
        <position position="20"/>
    </location>
</feature>
<feature type="binding site" evidence="1">
    <location>
        <position position="28"/>
    </location>
    <ligand>
        <name>substrate</name>
    </ligand>
</feature>
<feature type="binding site" evidence="1">
    <location>
        <position position="99"/>
    </location>
    <ligand>
        <name>substrate</name>
    </ligand>
</feature>
<feature type="binding site" evidence="1">
    <location>
        <begin position="123"/>
        <end position="125"/>
    </location>
    <ligand>
        <name>substrate</name>
    </ligand>
</feature>
<reference key="1">
    <citation type="journal article" date="2005" name="J. Bacteriol.">
        <title>Insights on evolution of virulence and resistance from the complete genome analysis of an early methicillin-resistant Staphylococcus aureus strain and a biofilm-producing methicillin-resistant Staphylococcus epidermidis strain.</title>
        <authorList>
            <person name="Gill S.R."/>
            <person name="Fouts D.E."/>
            <person name="Archer G.L."/>
            <person name="Mongodin E.F."/>
            <person name="DeBoy R.T."/>
            <person name="Ravel J."/>
            <person name="Paulsen I.T."/>
            <person name="Kolonay J.F."/>
            <person name="Brinkac L.M."/>
            <person name="Beanan M.J."/>
            <person name="Dodson R.J."/>
            <person name="Daugherty S.C."/>
            <person name="Madupu R."/>
            <person name="Angiuoli S.V."/>
            <person name="Durkin A.S."/>
            <person name="Haft D.H."/>
            <person name="Vamathevan J.J."/>
            <person name="Khouri H."/>
            <person name="Utterback T.R."/>
            <person name="Lee C."/>
            <person name="Dimitrov G."/>
            <person name="Jiang L."/>
            <person name="Qin H."/>
            <person name="Weidman J."/>
            <person name="Tran K."/>
            <person name="Kang K.H."/>
            <person name="Hance I.R."/>
            <person name="Nelson K.E."/>
            <person name="Fraser C.M."/>
        </authorList>
    </citation>
    <scope>NUCLEOTIDE SEQUENCE [LARGE SCALE GENOMIC DNA]</scope>
    <source>
        <strain>COL</strain>
    </source>
</reference>
<proteinExistence type="inferred from homology"/>
<comment type="function">
    <text evidence="1">Catalyzes the interconversion of beta-pyran and beta-furan forms of D-ribose.</text>
</comment>
<comment type="catalytic activity">
    <reaction evidence="1">
        <text>beta-D-ribopyranose = beta-D-ribofuranose</text>
        <dbReference type="Rhea" id="RHEA:25432"/>
        <dbReference type="ChEBI" id="CHEBI:27476"/>
        <dbReference type="ChEBI" id="CHEBI:47002"/>
        <dbReference type="EC" id="5.4.99.62"/>
    </reaction>
</comment>
<comment type="pathway">
    <text evidence="1">Carbohydrate metabolism; D-ribose degradation; D-ribose 5-phosphate from beta-D-ribopyranose: step 1/2.</text>
</comment>
<comment type="subunit">
    <text evidence="1">Homodecamer.</text>
</comment>
<comment type="subcellular location">
    <subcellularLocation>
        <location evidence="1">Cytoplasm</location>
    </subcellularLocation>
</comment>
<comment type="similarity">
    <text evidence="1">Belongs to the RbsD / FucU family. RbsD subfamily.</text>
</comment>
<sequence>MKKSAVLNEHISKAIATIGHFDLLTINDAGMPIPNDHRRIDLAVTKNLPRFIDVLATVLEEMEIQKIYLAEEIKEHNPTQLQQIKQLISSEIEIIFIPHEEMKSNLAHPLNKGNIRTGETTPYSNIALESNVTF</sequence>